<feature type="chain" id="PRO_0000354797" description="Catalase-peroxidase">
    <location>
        <begin position="1"/>
        <end position="744"/>
    </location>
</feature>
<feature type="region of interest" description="Disordered" evidence="2">
    <location>
        <begin position="353"/>
        <end position="372"/>
    </location>
</feature>
<feature type="active site" description="Proton acceptor" evidence="1">
    <location>
        <position position="109"/>
    </location>
</feature>
<feature type="binding site" description="axial binding residue" evidence="1">
    <location>
        <position position="272"/>
    </location>
    <ligand>
        <name>heme b</name>
        <dbReference type="ChEBI" id="CHEBI:60344"/>
    </ligand>
    <ligandPart>
        <name>Fe</name>
        <dbReference type="ChEBI" id="CHEBI:18248"/>
    </ligandPart>
</feature>
<feature type="site" description="Transition state stabilizer" evidence="1">
    <location>
        <position position="105"/>
    </location>
</feature>
<feature type="cross-link" description="Tryptophyl-tyrosyl-methioninium (Trp-Tyr) (with M-257)" evidence="1">
    <location>
        <begin position="108"/>
        <end position="231"/>
    </location>
</feature>
<feature type="cross-link" description="Tryptophyl-tyrosyl-methioninium (Tyr-Met) (with W-108)" evidence="1">
    <location>
        <begin position="231"/>
        <end position="257"/>
    </location>
</feature>
<organism>
    <name type="scientific">Frankia casuarinae (strain DSM 45818 / CECT 9043 / HFP020203 / CcI3)</name>
    <dbReference type="NCBI Taxonomy" id="106370"/>
    <lineage>
        <taxon>Bacteria</taxon>
        <taxon>Bacillati</taxon>
        <taxon>Actinomycetota</taxon>
        <taxon>Actinomycetes</taxon>
        <taxon>Frankiales</taxon>
        <taxon>Frankiaceae</taxon>
        <taxon>Frankia</taxon>
    </lineage>
</organism>
<evidence type="ECO:0000255" key="1">
    <source>
        <dbReference type="HAMAP-Rule" id="MF_01961"/>
    </source>
</evidence>
<evidence type="ECO:0000256" key="2">
    <source>
        <dbReference type="SAM" id="MobiDB-lite"/>
    </source>
</evidence>
<accession>Q2JBP8</accession>
<reference key="1">
    <citation type="journal article" date="2007" name="Genome Res.">
        <title>Genome characteristics of facultatively symbiotic Frankia sp. strains reflect host range and host plant biogeography.</title>
        <authorList>
            <person name="Normand P."/>
            <person name="Lapierre P."/>
            <person name="Tisa L.S."/>
            <person name="Gogarten J.P."/>
            <person name="Alloisio N."/>
            <person name="Bagnarol E."/>
            <person name="Bassi C.A."/>
            <person name="Berry A.M."/>
            <person name="Bickhart D.M."/>
            <person name="Choisne N."/>
            <person name="Couloux A."/>
            <person name="Cournoyer B."/>
            <person name="Cruveiller S."/>
            <person name="Daubin V."/>
            <person name="Demange N."/>
            <person name="Francino M.P."/>
            <person name="Goltsman E."/>
            <person name="Huang Y."/>
            <person name="Kopp O.R."/>
            <person name="Labarre L."/>
            <person name="Lapidus A."/>
            <person name="Lavire C."/>
            <person name="Marechal J."/>
            <person name="Martinez M."/>
            <person name="Mastronunzio J.E."/>
            <person name="Mullin B.C."/>
            <person name="Niemann J."/>
            <person name="Pujic P."/>
            <person name="Rawnsley T."/>
            <person name="Rouy Z."/>
            <person name="Schenowitz C."/>
            <person name="Sellstedt A."/>
            <person name="Tavares F."/>
            <person name="Tomkins J.P."/>
            <person name="Vallenet D."/>
            <person name="Valverde C."/>
            <person name="Wall L.G."/>
            <person name="Wang Y."/>
            <person name="Medigue C."/>
            <person name="Benson D.R."/>
        </authorList>
    </citation>
    <scope>NUCLEOTIDE SEQUENCE [LARGE SCALE GENOMIC DNA]</scope>
    <source>
        <strain>DSM 45818 / CECT 9043 / HFP020203 / CcI3</strain>
    </source>
</reference>
<proteinExistence type="inferred from homology"/>
<sequence length="744" mass="80679">MSENHDAVVYNTNAENGGGCPVAHRRAPHPTQGGGNRGWWPNRLNLKILAKNPAVANPLGGEFTYAEAFRTLDLAAVKQDIAAVLTTSQAWWPADYGHYGPFIIRMAWHSAGTYRISDGRGGAGAGQLRFAPLNSWPDNANLDKARRLLWPVKKKYGQKISWADLMILAGNVALESMGFETFGFAGGRVDVWEPDEDVYWGPETTWLDDERYTGDRELENPLAAVQMGLIYVNPEGPNGNPDPIAAARDIRETFRRMAMNDEETVALIAGGHTFGKTHGAANPDEHVGPEPEGAPIEEQGFGWTSTFGTGRGGDTITSGLEGAWTNTPVSWDNSFFEILFSYEWELTKSPAGANQWKPKDGAGAGTVPDAHDAAKSHAPTMLTTDLALRFDPIYEPISRRFLENPSAFADAFARAWFKLTHRDLGPVARYLGPEVPTETLLWQDPLPAVAHELIDAADVATLKGQILASGLSVSQLVSTAWASASTFRGGDKRGGANGARIRLEPQRGWEVNEPDQLAAVLRTLTRIQEVFNAAQTGGKQVSLADLIVLAGGVAVEQAAANAGFDVEVPFAPGRTDASQEQTDVESFAVLEPTADGFRNYLGKGHRLPAEYLLLDRANQLTLSAPELTVLVGGLRVLGANYQQSPLGVFTATPGSLTNDFFVNLLELGTTWKTTSEDANTFEGRDAATGKVRWTGSRADLVFGSNSELRALAEVYASDDAREKFVHDFVAAWVKVMNLDRFDLV</sequence>
<keyword id="KW-0349">Heme</keyword>
<keyword id="KW-0376">Hydrogen peroxide</keyword>
<keyword id="KW-0408">Iron</keyword>
<keyword id="KW-0479">Metal-binding</keyword>
<keyword id="KW-0560">Oxidoreductase</keyword>
<keyword id="KW-0575">Peroxidase</keyword>
<keyword id="KW-1185">Reference proteome</keyword>
<gene>
    <name evidence="1" type="primary">katG</name>
    <name type="ordered locus">Francci3_1918</name>
</gene>
<protein>
    <recommendedName>
        <fullName evidence="1">Catalase-peroxidase</fullName>
        <shortName evidence="1">CP</shortName>
        <ecNumber evidence="1">1.11.1.21</ecNumber>
    </recommendedName>
    <alternativeName>
        <fullName evidence="1">Peroxidase/catalase</fullName>
    </alternativeName>
</protein>
<dbReference type="EC" id="1.11.1.21" evidence="1"/>
<dbReference type="EMBL" id="CP000249">
    <property type="protein sequence ID" value="ABD11294.1"/>
    <property type="molecule type" value="Genomic_DNA"/>
</dbReference>
<dbReference type="RefSeq" id="WP_011436354.1">
    <property type="nucleotide sequence ID" value="NZ_JENI01000114.1"/>
</dbReference>
<dbReference type="SMR" id="Q2JBP8"/>
<dbReference type="STRING" id="106370.Francci3_1918"/>
<dbReference type="PeroxiBase" id="2368">
    <property type="entry name" value="FspCP_CcI3"/>
</dbReference>
<dbReference type="KEGG" id="fra:Francci3_1918"/>
<dbReference type="eggNOG" id="COG0376">
    <property type="taxonomic scope" value="Bacteria"/>
</dbReference>
<dbReference type="HOGENOM" id="CLU_025424_2_0_11"/>
<dbReference type="OrthoDB" id="9759743at2"/>
<dbReference type="PhylomeDB" id="Q2JBP8"/>
<dbReference type="Proteomes" id="UP000001937">
    <property type="component" value="Chromosome"/>
</dbReference>
<dbReference type="GO" id="GO:0005829">
    <property type="term" value="C:cytosol"/>
    <property type="evidence" value="ECO:0007669"/>
    <property type="project" value="TreeGrafter"/>
</dbReference>
<dbReference type="GO" id="GO:0004096">
    <property type="term" value="F:catalase activity"/>
    <property type="evidence" value="ECO:0007669"/>
    <property type="project" value="UniProtKB-UniRule"/>
</dbReference>
<dbReference type="GO" id="GO:0020037">
    <property type="term" value="F:heme binding"/>
    <property type="evidence" value="ECO:0007669"/>
    <property type="project" value="InterPro"/>
</dbReference>
<dbReference type="GO" id="GO:0046872">
    <property type="term" value="F:metal ion binding"/>
    <property type="evidence" value="ECO:0007669"/>
    <property type="project" value="UniProtKB-KW"/>
</dbReference>
<dbReference type="GO" id="GO:0070301">
    <property type="term" value="P:cellular response to hydrogen peroxide"/>
    <property type="evidence" value="ECO:0007669"/>
    <property type="project" value="TreeGrafter"/>
</dbReference>
<dbReference type="GO" id="GO:0042744">
    <property type="term" value="P:hydrogen peroxide catabolic process"/>
    <property type="evidence" value="ECO:0007669"/>
    <property type="project" value="UniProtKB-KW"/>
</dbReference>
<dbReference type="CDD" id="cd00649">
    <property type="entry name" value="catalase_peroxidase_1"/>
    <property type="match status" value="1"/>
</dbReference>
<dbReference type="CDD" id="cd08200">
    <property type="entry name" value="catalase_peroxidase_2"/>
    <property type="match status" value="1"/>
</dbReference>
<dbReference type="FunFam" id="1.10.420.10:FF:000002">
    <property type="entry name" value="Catalase-peroxidase"/>
    <property type="match status" value="1"/>
</dbReference>
<dbReference type="FunFam" id="1.10.420.10:FF:000004">
    <property type="entry name" value="Catalase-peroxidase"/>
    <property type="match status" value="1"/>
</dbReference>
<dbReference type="FunFam" id="1.10.520.10:FF:000002">
    <property type="entry name" value="Catalase-peroxidase"/>
    <property type="match status" value="1"/>
</dbReference>
<dbReference type="Gene3D" id="1.10.520.10">
    <property type="match status" value="2"/>
</dbReference>
<dbReference type="Gene3D" id="1.10.420.10">
    <property type="entry name" value="Peroxidase, domain 2"/>
    <property type="match status" value="2"/>
</dbReference>
<dbReference type="HAMAP" id="MF_01961">
    <property type="entry name" value="Catal_peroxid"/>
    <property type="match status" value="1"/>
</dbReference>
<dbReference type="InterPro" id="IPR000763">
    <property type="entry name" value="Catalase_peroxidase"/>
</dbReference>
<dbReference type="InterPro" id="IPR002016">
    <property type="entry name" value="Haem_peroxidase"/>
</dbReference>
<dbReference type="InterPro" id="IPR010255">
    <property type="entry name" value="Haem_peroxidase_sf"/>
</dbReference>
<dbReference type="InterPro" id="IPR019794">
    <property type="entry name" value="Peroxidases_AS"/>
</dbReference>
<dbReference type="InterPro" id="IPR019793">
    <property type="entry name" value="Peroxidases_heam-ligand_BS"/>
</dbReference>
<dbReference type="NCBIfam" id="TIGR00198">
    <property type="entry name" value="cat_per_HPI"/>
    <property type="match status" value="1"/>
</dbReference>
<dbReference type="NCBIfam" id="NF011635">
    <property type="entry name" value="PRK15061.1"/>
    <property type="match status" value="1"/>
</dbReference>
<dbReference type="PANTHER" id="PTHR30555:SF0">
    <property type="entry name" value="CATALASE-PEROXIDASE"/>
    <property type="match status" value="1"/>
</dbReference>
<dbReference type="PANTHER" id="PTHR30555">
    <property type="entry name" value="HYDROPEROXIDASE I, BIFUNCTIONAL CATALASE-PEROXIDASE"/>
    <property type="match status" value="1"/>
</dbReference>
<dbReference type="Pfam" id="PF00141">
    <property type="entry name" value="peroxidase"/>
    <property type="match status" value="2"/>
</dbReference>
<dbReference type="PRINTS" id="PR00460">
    <property type="entry name" value="BPEROXIDASE"/>
</dbReference>
<dbReference type="PRINTS" id="PR00458">
    <property type="entry name" value="PEROXIDASE"/>
</dbReference>
<dbReference type="SUPFAM" id="SSF48113">
    <property type="entry name" value="Heme-dependent peroxidases"/>
    <property type="match status" value="2"/>
</dbReference>
<dbReference type="PROSITE" id="PS00435">
    <property type="entry name" value="PEROXIDASE_1"/>
    <property type="match status" value="1"/>
</dbReference>
<dbReference type="PROSITE" id="PS00436">
    <property type="entry name" value="PEROXIDASE_2"/>
    <property type="match status" value="1"/>
</dbReference>
<dbReference type="PROSITE" id="PS50873">
    <property type="entry name" value="PEROXIDASE_4"/>
    <property type="match status" value="1"/>
</dbReference>
<name>KATG_FRACC</name>
<comment type="function">
    <text evidence="1">Bifunctional enzyme with both catalase and broad-spectrum peroxidase activity.</text>
</comment>
<comment type="catalytic activity">
    <reaction evidence="1">
        <text>H2O2 + AH2 = A + 2 H2O</text>
        <dbReference type="Rhea" id="RHEA:30275"/>
        <dbReference type="ChEBI" id="CHEBI:13193"/>
        <dbReference type="ChEBI" id="CHEBI:15377"/>
        <dbReference type="ChEBI" id="CHEBI:16240"/>
        <dbReference type="ChEBI" id="CHEBI:17499"/>
        <dbReference type="EC" id="1.11.1.21"/>
    </reaction>
</comment>
<comment type="catalytic activity">
    <reaction evidence="1">
        <text>2 H2O2 = O2 + 2 H2O</text>
        <dbReference type="Rhea" id="RHEA:20309"/>
        <dbReference type="ChEBI" id="CHEBI:15377"/>
        <dbReference type="ChEBI" id="CHEBI:15379"/>
        <dbReference type="ChEBI" id="CHEBI:16240"/>
        <dbReference type="EC" id="1.11.1.21"/>
    </reaction>
</comment>
<comment type="cofactor">
    <cofactor evidence="1">
        <name>heme b</name>
        <dbReference type="ChEBI" id="CHEBI:60344"/>
    </cofactor>
    <text evidence="1">Binds 1 heme b (iron(II)-protoporphyrin IX) group per dimer.</text>
</comment>
<comment type="subunit">
    <text evidence="1">Homodimer or homotetramer.</text>
</comment>
<comment type="PTM">
    <text evidence="1">Formation of the three residue Trp-Tyr-Met cross-link is important for the catalase, but not the peroxidase activity of the enzyme.</text>
</comment>
<comment type="similarity">
    <text evidence="1">Belongs to the peroxidase family. Peroxidase/catalase subfamily.</text>
</comment>